<feature type="signal peptide" evidence="1">
    <location>
        <begin position="1"/>
        <end position="23"/>
    </location>
</feature>
<feature type="chain" id="PRO_5000314599" description="UPF0312 protein PputW619_0484">
    <location>
        <begin position="24"/>
        <end position="192"/>
    </location>
</feature>
<organism>
    <name type="scientific">Pseudomonas putida (strain W619)</name>
    <dbReference type="NCBI Taxonomy" id="390235"/>
    <lineage>
        <taxon>Bacteria</taxon>
        <taxon>Pseudomonadati</taxon>
        <taxon>Pseudomonadota</taxon>
        <taxon>Gammaproteobacteria</taxon>
        <taxon>Pseudomonadales</taxon>
        <taxon>Pseudomonadaceae</taxon>
        <taxon>Pseudomonas</taxon>
    </lineage>
</organism>
<keyword id="KW-0574">Periplasm</keyword>
<keyword id="KW-0732">Signal</keyword>
<dbReference type="EMBL" id="CP000949">
    <property type="protein sequence ID" value="ACA70989.1"/>
    <property type="molecule type" value="Genomic_DNA"/>
</dbReference>
<dbReference type="SMR" id="B1J2Y3"/>
<dbReference type="STRING" id="390235.PputW619_0484"/>
<dbReference type="KEGG" id="ppw:PputW619_0484"/>
<dbReference type="eggNOG" id="COG2353">
    <property type="taxonomic scope" value="Bacteria"/>
</dbReference>
<dbReference type="HOGENOM" id="CLU_071003_1_2_6"/>
<dbReference type="OrthoDB" id="9811006at2"/>
<dbReference type="GO" id="GO:0042597">
    <property type="term" value="C:periplasmic space"/>
    <property type="evidence" value="ECO:0007669"/>
    <property type="project" value="UniProtKB-SubCell"/>
</dbReference>
<dbReference type="Gene3D" id="2.40.128.110">
    <property type="entry name" value="Lipid/polyisoprenoid-binding, YceI-like"/>
    <property type="match status" value="1"/>
</dbReference>
<dbReference type="HAMAP" id="MF_00780">
    <property type="entry name" value="UPF0312"/>
    <property type="match status" value="1"/>
</dbReference>
<dbReference type="InterPro" id="IPR007372">
    <property type="entry name" value="Lipid/polyisoprenoid-bd_YceI"/>
</dbReference>
<dbReference type="InterPro" id="IPR036761">
    <property type="entry name" value="TTHA0802/YceI-like_sf"/>
</dbReference>
<dbReference type="InterPro" id="IPR023480">
    <property type="entry name" value="UPF0312/YceI"/>
</dbReference>
<dbReference type="NCBIfam" id="NF002994">
    <property type="entry name" value="PRK03757.1"/>
    <property type="match status" value="1"/>
</dbReference>
<dbReference type="PANTHER" id="PTHR34406">
    <property type="entry name" value="PROTEIN YCEI"/>
    <property type="match status" value="1"/>
</dbReference>
<dbReference type="PANTHER" id="PTHR34406:SF1">
    <property type="entry name" value="PROTEIN YCEI"/>
    <property type="match status" value="1"/>
</dbReference>
<dbReference type="Pfam" id="PF04264">
    <property type="entry name" value="YceI"/>
    <property type="match status" value="1"/>
</dbReference>
<dbReference type="SMART" id="SM00867">
    <property type="entry name" value="YceI"/>
    <property type="match status" value="1"/>
</dbReference>
<dbReference type="SUPFAM" id="SSF101874">
    <property type="entry name" value="YceI-like"/>
    <property type="match status" value="1"/>
</dbReference>
<comment type="subcellular location">
    <subcellularLocation>
        <location evidence="1">Periplasm</location>
    </subcellularLocation>
</comment>
<comment type="similarity">
    <text evidence="1">Belongs to the UPF0312 family. Type 1 subfamily.</text>
</comment>
<proteinExistence type="inferred from homology"/>
<reference key="1">
    <citation type="submission" date="2008-02" db="EMBL/GenBank/DDBJ databases">
        <title>Complete sequence of Pseudomonas putida W619.</title>
        <authorList>
            <person name="Copeland A."/>
            <person name="Lucas S."/>
            <person name="Lapidus A."/>
            <person name="Barry K."/>
            <person name="Detter J.C."/>
            <person name="Glavina del Rio T."/>
            <person name="Dalin E."/>
            <person name="Tice H."/>
            <person name="Pitluck S."/>
            <person name="Chain P."/>
            <person name="Malfatti S."/>
            <person name="Shin M."/>
            <person name="Vergez L."/>
            <person name="Schmutz J."/>
            <person name="Larimer F."/>
            <person name="Land M."/>
            <person name="Hauser L."/>
            <person name="Kyrpides N."/>
            <person name="Kim E."/>
            <person name="Taghavi S."/>
            <person name="Vangronsveld D."/>
            <person name="van der Lelie D."/>
            <person name="Richardson P."/>
        </authorList>
    </citation>
    <scope>NUCLEOTIDE SEQUENCE [LARGE SCALE GENOMIC DNA]</scope>
    <source>
        <strain>W619</strain>
    </source>
</reference>
<protein>
    <recommendedName>
        <fullName evidence="1">UPF0312 protein PputW619_0484</fullName>
    </recommendedName>
</protein>
<accession>B1J2Y3</accession>
<gene>
    <name type="ordered locus">PputW619_0484</name>
</gene>
<name>Y484_PSEPW</name>
<evidence type="ECO:0000255" key="1">
    <source>
        <dbReference type="HAMAP-Rule" id="MF_00780"/>
    </source>
</evidence>
<sequence length="192" mass="20702">MLKKTFAALALGTALLSAGQAMAAEYKIDKEGQHAFVDWKISHLGYSFIHGTFKDFDGNFTWDSAKPEASKISVDLKTASLWSNHAERDKHIASADFLDVKKYPEAKFVSTAVKSTGEKTADVTGDLTLHGVTKPVTFKATFNGEGKDPWGGERAGFNATTTLNLNDFGIKGPGATSQTLDLDISVEGVKQK</sequence>